<feature type="chain" id="PRO_1000060699" description="Homoserine kinase">
    <location>
        <begin position="1"/>
        <end position="310"/>
    </location>
</feature>
<feature type="binding site" evidence="1">
    <location>
        <begin position="91"/>
        <end position="101"/>
    </location>
    <ligand>
        <name>ATP</name>
        <dbReference type="ChEBI" id="CHEBI:30616"/>
    </ligand>
</feature>
<evidence type="ECO:0000255" key="1">
    <source>
        <dbReference type="HAMAP-Rule" id="MF_00384"/>
    </source>
</evidence>
<reference key="1">
    <citation type="journal article" date="2008" name="J. Bacteriol.">
        <title>The pangenome structure of Escherichia coli: comparative genomic analysis of E. coli commensal and pathogenic isolates.</title>
        <authorList>
            <person name="Rasko D.A."/>
            <person name="Rosovitz M.J."/>
            <person name="Myers G.S.A."/>
            <person name="Mongodin E.F."/>
            <person name="Fricke W.F."/>
            <person name="Gajer P."/>
            <person name="Crabtree J."/>
            <person name="Sebaihia M."/>
            <person name="Thomson N.R."/>
            <person name="Chaudhuri R."/>
            <person name="Henderson I.R."/>
            <person name="Sperandio V."/>
            <person name="Ravel J."/>
        </authorList>
    </citation>
    <scope>NUCLEOTIDE SEQUENCE [LARGE SCALE GENOMIC DNA]</scope>
    <source>
        <strain>E24377A / ETEC</strain>
    </source>
</reference>
<comment type="function">
    <text evidence="1">Catalyzes the ATP-dependent phosphorylation of L-homoserine to L-homoserine phosphate.</text>
</comment>
<comment type="catalytic activity">
    <reaction evidence="1">
        <text>L-homoserine + ATP = O-phospho-L-homoserine + ADP + H(+)</text>
        <dbReference type="Rhea" id="RHEA:13985"/>
        <dbReference type="ChEBI" id="CHEBI:15378"/>
        <dbReference type="ChEBI" id="CHEBI:30616"/>
        <dbReference type="ChEBI" id="CHEBI:57476"/>
        <dbReference type="ChEBI" id="CHEBI:57590"/>
        <dbReference type="ChEBI" id="CHEBI:456216"/>
        <dbReference type="EC" id="2.7.1.39"/>
    </reaction>
</comment>
<comment type="pathway">
    <text evidence="1">Amino-acid biosynthesis; L-threonine biosynthesis; L-threonine from L-aspartate: step 4/5.</text>
</comment>
<comment type="subcellular location">
    <subcellularLocation>
        <location evidence="1">Cytoplasm</location>
    </subcellularLocation>
</comment>
<comment type="similarity">
    <text evidence="1">Belongs to the GHMP kinase family. Homoserine kinase subfamily.</text>
</comment>
<gene>
    <name evidence="1" type="primary">thrB</name>
    <name type="ordered locus">EcE24377A_0002</name>
</gene>
<dbReference type="EC" id="2.7.1.39" evidence="1"/>
<dbReference type="EMBL" id="CP000800">
    <property type="protein sequence ID" value="ABV19834.1"/>
    <property type="molecule type" value="Genomic_DNA"/>
</dbReference>
<dbReference type="RefSeq" id="WP_000241660.1">
    <property type="nucleotide sequence ID" value="NC_009801.1"/>
</dbReference>
<dbReference type="SMR" id="A7ZH92"/>
<dbReference type="GeneID" id="75202912"/>
<dbReference type="KEGG" id="ecw:EcE24377A_0002"/>
<dbReference type="HOGENOM" id="CLU_041243_1_1_6"/>
<dbReference type="UniPathway" id="UPA00050">
    <property type="reaction ID" value="UER00064"/>
</dbReference>
<dbReference type="Proteomes" id="UP000001122">
    <property type="component" value="Chromosome"/>
</dbReference>
<dbReference type="GO" id="GO:0005737">
    <property type="term" value="C:cytoplasm"/>
    <property type="evidence" value="ECO:0007669"/>
    <property type="project" value="UniProtKB-SubCell"/>
</dbReference>
<dbReference type="GO" id="GO:0005524">
    <property type="term" value="F:ATP binding"/>
    <property type="evidence" value="ECO:0007669"/>
    <property type="project" value="UniProtKB-UniRule"/>
</dbReference>
<dbReference type="GO" id="GO:0004413">
    <property type="term" value="F:homoserine kinase activity"/>
    <property type="evidence" value="ECO:0007669"/>
    <property type="project" value="UniProtKB-UniRule"/>
</dbReference>
<dbReference type="GO" id="GO:0009088">
    <property type="term" value="P:threonine biosynthetic process"/>
    <property type="evidence" value="ECO:0007669"/>
    <property type="project" value="UniProtKB-UniRule"/>
</dbReference>
<dbReference type="FunFam" id="3.30.230.10:FF:000020">
    <property type="entry name" value="Homoserine kinase"/>
    <property type="match status" value="1"/>
</dbReference>
<dbReference type="FunFam" id="3.30.70.890:FF:000002">
    <property type="entry name" value="Homoserine kinase"/>
    <property type="match status" value="1"/>
</dbReference>
<dbReference type="Gene3D" id="3.30.230.10">
    <property type="match status" value="1"/>
</dbReference>
<dbReference type="Gene3D" id="3.30.70.890">
    <property type="entry name" value="GHMP kinase, C-terminal domain"/>
    <property type="match status" value="1"/>
</dbReference>
<dbReference type="HAMAP" id="MF_00384">
    <property type="entry name" value="Homoser_kinase"/>
    <property type="match status" value="1"/>
</dbReference>
<dbReference type="InterPro" id="IPR013750">
    <property type="entry name" value="GHMP_kinase_C_dom"/>
</dbReference>
<dbReference type="InterPro" id="IPR036554">
    <property type="entry name" value="GHMP_kinase_C_sf"/>
</dbReference>
<dbReference type="InterPro" id="IPR006204">
    <property type="entry name" value="GHMP_kinase_N_dom"/>
</dbReference>
<dbReference type="InterPro" id="IPR006203">
    <property type="entry name" value="GHMP_knse_ATP-bd_CS"/>
</dbReference>
<dbReference type="InterPro" id="IPR000870">
    <property type="entry name" value="Homoserine_kinase"/>
</dbReference>
<dbReference type="InterPro" id="IPR020568">
    <property type="entry name" value="Ribosomal_Su5_D2-typ_SF"/>
</dbReference>
<dbReference type="InterPro" id="IPR014721">
    <property type="entry name" value="Ribsml_uS5_D2-typ_fold_subgr"/>
</dbReference>
<dbReference type="NCBIfam" id="NF002288">
    <property type="entry name" value="PRK01212.1-4"/>
    <property type="match status" value="1"/>
</dbReference>
<dbReference type="NCBIfam" id="TIGR00191">
    <property type="entry name" value="thrB"/>
    <property type="match status" value="1"/>
</dbReference>
<dbReference type="PANTHER" id="PTHR20861:SF1">
    <property type="entry name" value="HOMOSERINE KINASE"/>
    <property type="match status" value="1"/>
</dbReference>
<dbReference type="PANTHER" id="PTHR20861">
    <property type="entry name" value="HOMOSERINE/4-DIPHOSPHOCYTIDYL-2-C-METHYL-D-ERYTHRITOL KINASE"/>
    <property type="match status" value="1"/>
</dbReference>
<dbReference type="Pfam" id="PF08544">
    <property type="entry name" value="GHMP_kinases_C"/>
    <property type="match status" value="1"/>
</dbReference>
<dbReference type="Pfam" id="PF00288">
    <property type="entry name" value="GHMP_kinases_N"/>
    <property type="match status" value="1"/>
</dbReference>
<dbReference type="PIRSF" id="PIRSF000676">
    <property type="entry name" value="Homoser_kin"/>
    <property type="match status" value="1"/>
</dbReference>
<dbReference type="PRINTS" id="PR00958">
    <property type="entry name" value="HOMSERKINASE"/>
</dbReference>
<dbReference type="SUPFAM" id="SSF55060">
    <property type="entry name" value="GHMP Kinase, C-terminal domain"/>
    <property type="match status" value="1"/>
</dbReference>
<dbReference type="SUPFAM" id="SSF54211">
    <property type="entry name" value="Ribosomal protein S5 domain 2-like"/>
    <property type="match status" value="1"/>
</dbReference>
<dbReference type="PROSITE" id="PS00627">
    <property type="entry name" value="GHMP_KINASES_ATP"/>
    <property type="match status" value="1"/>
</dbReference>
<organism>
    <name type="scientific">Escherichia coli O139:H28 (strain E24377A / ETEC)</name>
    <dbReference type="NCBI Taxonomy" id="331111"/>
    <lineage>
        <taxon>Bacteria</taxon>
        <taxon>Pseudomonadati</taxon>
        <taxon>Pseudomonadota</taxon>
        <taxon>Gammaproteobacteria</taxon>
        <taxon>Enterobacterales</taxon>
        <taxon>Enterobacteriaceae</taxon>
        <taxon>Escherichia</taxon>
    </lineage>
</organism>
<sequence length="310" mass="33610">MVKVYAPASSANMSVGFDVLGAAVTPVDGALLGDVVTVEAAETFSLNNLGRFADKLPSEPRENIVYQCWERFCQELGKQIPVAMTLEKNMPIGSGLGSSACSVVAALMAMNEHCGKPLNDTRLLALMGELEGRISGSIHYDNVAPCFLGGMQLMIEENDIISQQVPGFDEWLWVLAYPGIKVSTAEARAILPAQYRRQDCIAHGRHLAGFIHACYSRQPELAAKLMKDVIAEPYRERLLPGFRQARQAVAEIGAVASGISGSGPTLFALCDKPDTAQRVADWLGKNYLQNQEGFVHICRLDTAGARVLEN</sequence>
<name>KHSE_ECO24</name>
<keyword id="KW-0028">Amino-acid biosynthesis</keyword>
<keyword id="KW-0067">ATP-binding</keyword>
<keyword id="KW-0963">Cytoplasm</keyword>
<keyword id="KW-0418">Kinase</keyword>
<keyword id="KW-0547">Nucleotide-binding</keyword>
<keyword id="KW-1185">Reference proteome</keyword>
<keyword id="KW-0791">Threonine biosynthesis</keyword>
<keyword id="KW-0808">Transferase</keyword>
<accession>A7ZH92</accession>
<proteinExistence type="inferred from homology"/>
<protein>
    <recommendedName>
        <fullName evidence="1">Homoserine kinase</fullName>
        <shortName evidence="1">HK</shortName>
        <shortName evidence="1">HSK</shortName>
        <ecNumber evidence="1">2.7.1.39</ecNumber>
    </recommendedName>
</protein>